<gene>
    <name evidence="7" type="primary">INO1</name>
    <name evidence="10" type="ORF">CNAG_01539</name>
</gene>
<sequence>MSPTALDACDHHDSFSLPAQDQSKVHPSARRTPEGGLIKVESDSTVYEADGIKAKFTDRGASVIKGSDGKLSVKKTEKNFEFFTKSTVGRVGLMLVGLGGNNGTTVLATNLANKYNISWHTKNGIQQPNYIGSVVRASTVRLGTDPETGKDVFVPISDMLPMVHPNDFVIGGWDISSLSMDKAMLRAKVLEWDLQRQLIPLMENVKPLPSIYYPDFIAANQADRADNLIPGDDKKVHLEHIRADIRRFKADNHLDSVVVLWTANTERYADIIPGVNDTADNLLKAVETSHEEVSPSTIFAMASILEGVPFINGSPQNTFVPGCIELAEKHKAFIGGDDFKSGQTKVKSVLAEFLVNAGIKPLSISSYNHLGNNDGKNLSSQRQFRSKEISKSSVVDDMVAANPILYKTAEDLSKATGEIVKKGEHPDHIVVIKHVPAVGDSKRAIDEYYSELLMGGRNVMNIFNECEDSLLATPLIFDLAILAELLTRVTYRENATGEWQPLYSVLSLLSYMLKAPLVKPGEDVVNSLNRQRNALEQFLKACLGLEHSNDLLLNTRVW</sequence>
<keyword id="KW-0963">Cytoplasm</keyword>
<keyword id="KW-0398">Inositol biosynthesis</keyword>
<keyword id="KW-0413">Isomerase</keyword>
<keyword id="KW-0444">Lipid biosynthesis</keyword>
<keyword id="KW-0443">Lipid metabolism</keyword>
<keyword id="KW-0520">NAD</keyword>
<keyword id="KW-0594">Phospholipid biosynthesis</keyword>
<keyword id="KW-1208">Phospholipid metabolism</keyword>
<name>INO1_CRYNH</name>
<feature type="chain" id="PRO_0000456777" description="Inositol-3-phosphate synthase">
    <location>
        <begin position="1"/>
        <end position="558"/>
    </location>
</feature>
<feature type="region of interest" description="Disordered" evidence="3">
    <location>
        <begin position="1"/>
        <end position="34"/>
    </location>
</feature>
<feature type="binding site" evidence="1">
    <location>
        <position position="99"/>
    </location>
    <ligand>
        <name>NAD(+)</name>
        <dbReference type="ChEBI" id="CHEBI:57540"/>
    </ligand>
</feature>
<feature type="binding site" evidence="1">
    <location>
        <position position="100"/>
    </location>
    <ligand>
        <name>NAD(+)</name>
        <dbReference type="ChEBI" id="CHEBI:57540"/>
    </ligand>
</feature>
<feature type="binding site" evidence="1">
    <location>
        <position position="101"/>
    </location>
    <ligand>
        <name>NAD(+)</name>
        <dbReference type="ChEBI" id="CHEBI:57540"/>
    </ligand>
</feature>
<feature type="binding site" evidence="1">
    <location>
        <position position="102"/>
    </location>
    <ligand>
        <name>NAD(+)</name>
        <dbReference type="ChEBI" id="CHEBI:57540"/>
    </ligand>
</feature>
<feature type="binding site" evidence="1">
    <location>
        <position position="174"/>
    </location>
    <ligand>
        <name>NAD(+)</name>
        <dbReference type="ChEBI" id="CHEBI:57540"/>
    </ligand>
</feature>
<feature type="binding site" evidence="1">
    <location>
        <position position="210"/>
    </location>
    <ligand>
        <name>NAD(+)</name>
        <dbReference type="ChEBI" id="CHEBI:57540"/>
    </ligand>
</feature>
<feature type="binding site" evidence="1">
    <location>
        <position position="211"/>
    </location>
    <ligand>
        <name>NAD(+)</name>
        <dbReference type="ChEBI" id="CHEBI:57540"/>
    </ligand>
</feature>
<feature type="binding site" evidence="1">
    <location>
        <position position="221"/>
    </location>
    <ligand>
        <name>NAD(+)</name>
        <dbReference type="ChEBI" id="CHEBI:57540"/>
    </ligand>
</feature>
<feature type="binding site" evidence="1">
    <location>
        <position position="224"/>
    </location>
    <ligand>
        <name>NAD(+)</name>
        <dbReference type="ChEBI" id="CHEBI:57540"/>
    </ligand>
</feature>
<feature type="binding site" evidence="1">
    <location>
        <position position="262"/>
    </location>
    <ligand>
        <name>NAD(+)</name>
        <dbReference type="ChEBI" id="CHEBI:57540"/>
    </ligand>
</feature>
<feature type="binding site" evidence="1">
    <location>
        <position position="263"/>
    </location>
    <ligand>
        <name>NAD(+)</name>
        <dbReference type="ChEBI" id="CHEBI:57540"/>
    </ligand>
</feature>
<feature type="binding site" evidence="1">
    <location>
        <position position="264"/>
    </location>
    <ligand>
        <name>NAD(+)</name>
        <dbReference type="ChEBI" id="CHEBI:57540"/>
    </ligand>
</feature>
<feature type="binding site" evidence="1">
    <location>
        <position position="265"/>
    </location>
    <ligand>
        <name>NAD(+)</name>
        <dbReference type="ChEBI" id="CHEBI:57540"/>
    </ligand>
</feature>
<feature type="binding site" evidence="1">
    <location>
        <position position="313"/>
    </location>
    <ligand>
        <name>NAD(+)</name>
        <dbReference type="ChEBI" id="CHEBI:57540"/>
    </ligand>
</feature>
<feature type="binding site" evidence="1">
    <location>
        <position position="314"/>
    </location>
    <ligand>
        <name>NAD(+)</name>
        <dbReference type="ChEBI" id="CHEBI:57540"/>
    </ligand>
</feature>
<feature type="binding site" evidence="1">
    <location>
        <position position="338"/>
    </location>
    <ligand>
        <name>NAD(+)</name>
        <dbReference type="ChEBI" id="CHEBI:57540"/>
    </ligand>
</feature>
<feature type="binding site" evidence="1">
    <location>
        <position position="341"/>
    </location>
    <ligand>
        <name>NAD(+)</name>
        <dbReference type="ChEBI" id="CHEBI:57540"/>
    </ligand>
</feature>
<feature type="binding site" evidence="1">
    <location>
        <position position="372"/>
    </location>
    <ligand>
        <name>NAD(+)</name>
        <dbReference type="ChEBI" id="CHEBI:57540"/>
    </ligand>
</feature>
<feature type="binding site" evidence="1">
    <location>
        <position position="373"/>
    </location>
    <ligand>
        <name>NAD(+)</name>
        <dbReference type="ChEBI" id="CHEBI:57540"/>
    </ligand>
</feature>
<feature type="binding site" evidence="1">
    <location>
        <position position="374"/>
    </location>
    <ligand>
        <name>NAD(+)</name>
        <dbReference type="ChEBI" id="CHEBI:57540"/>
    </ligand>
</feature>
<feature type="binding site" evidence="1">
    <location>
        <position position="387"/>
    </location>
    <ligand>
        <name>NAD(+)</name>
        <dbReference type="ChEBI" id="CHEBI:57540"/>
    </ligand>
</feature>
<feature type="binding site" evidence="1">
    <location>
        <position position="439"/>
    </location>
    <ligand>
        <name>NAD(+)</name>
        <dbReference type="ChEBI" id="CHEBI:57540"/>
    </ligand>
</feature>
<feature type="binding site" evidence="1">
    <location>
        <position position="440"/>
    </location>
    <ligand>
        <name>NAD(+)</name>
        <dbReference type="ChEBI" id="CHEBI:57540"/>
    </ligand>
</feature>
<feature type="binding site" evidence="1">
    <location>
        <position position="468"/>
    </location>
    <ligand>
        <name>NAD(+)</name>
        <dbReference type="ChEBI" id="CHEBI:57540"/>
    </ligand>
</feature>
<feature type="binding site" evidence="1">
    <location>
        <position position="469"/>
    </location>
    <ligand>
        <name>NAD(+)</name>
        <dbReference type="ChEBI" id="CHEBI:57540"/>
    </ligand>
</feature>
<protein>
    <recommendedName>
        <fullName evidence="8">Inositol-3-phosphate synthase</fullName>
        <shortName evidence="1">MIP synthase</shortName>
        <ecNumber evidence="9">5.5.1.4</ecNumber>
    </recommendedName>
    <alternativeName>
        <fullName evidence="1">Myo-inositol 1-phosphate synthase</fullName>
        <shortName evidence="1">IPS</shortName>
        <shortName evidence="1">MI-1-P synthase</shortName>
    </alternativeName>
</protein>
<accession>J9VYL3</accession>
<comment type="function">
    <text evidence="2 5">Key enzyme in myo-inositol biosynthesis pathway that catalyzes the conversion of glucose 6-phosphate to 1-myo-inositol 1-phosphate in a NAD-dependent manner (PubMed:21398509). Rate-limiting enzyme in the synthesis of all inositol-containing compounds (By similarity).</text>
</comment>
<comment type="catalytic activity">
    <reaction evidence="9">
        <text>D-glucose 6-phosphate = 1D-myo-inositol 3-phosphate</text>
        <dbReference type="Rhea" id="RHEA:10716"/>
        <dbReference type="ChEBI" id="CHEBI:58401"/>
        <dbReference type="ChEBI" id="CHEBI:61548"/>
        <dbReference type="EC" id="5.5.1.4"/>
    </reaction>
</comment>
<comment type="cofactor">
    <cofactor evidence="1">
        <name>NAD(+)</name>
        <dbReference type="ChEBI" id="CHEBI:57540"/>
    </cofactor>
</comment>
<comment type="pathway">
    <text evidence="8">Polyol metabolism; myo-inositol biosynthesis; myo-inositol from D-glucose 6-phosphate: step 1/2.</text>
</comment>
<comment type="subunit">
    <text evidence="1">Homotetramer.</text>
</comment>
<comment type="subcellular location">
    <subcellularLocation>
        <location evidence="1">Cytoplasm</location>
    </subcellularLocation>
</comment>
<comment type="induction">
    <text evidence="6">Repressed by myo-inositol.</text>
</comment>
<comment type="disruption phenotype">
    <text evidence="4 5">Inositol auxotrophy (PubMed:21398509). Increases the RNA level of genes involved in inositol sensing and metabolism (PubMed:20689743). Simultaneous disruption of ITR1 or ITR1A lowers hyphal density and leads to a severe sporulation defect and attenuated virulence in a murine inhalation model of systemic infection (PubMed:20689743).</text>
</comment>
<comment type="similarity">
    <text evidence="8">Belongs to the myo-inositol 1-phosphate synthase family.</text>
</comment>
<reference evidence="11" key="1">
    <citation type="journal article" date="2014" name="PLoS Genet.">
        <title>Analysis of the genome and transcriptome of Cryptococcus neoformans var. grubii reveals complex RNA expression and microevolution leading to virulence attenuation.</title>
        <authorList>
            <person name="Janbon G."/>
            <person name="Ormerod K.L."/>
            <person name="Paulet D."/>
            <person name="Byrnes E.J. III"/>
            <person name="Yadav V."/>
            <person name="Chatterjee G."/>
            <person name="Mullapudi N."/>
            <person name="Hon C.-C."/>
            <person name="Billmyre R.B."/>
            <person name="Brunel F."/>
            <person name="Bahn Y.-S."/>
            <person name="Chen W."/>
            <person name="Chen Y."/>
            <person name="Chow E.W.L."/>
            <person name="Coppee J.-Y."/>
            <person name="Floyd-Averette A."/>
            <person name="Gaillardin C."/>
            <person name="Gerik K.J."/>
            <person name="Goldberg J."/>
            <person name="Gonzalez-Hilarion S."/>
            <person name="Gujja S."/>
            <person name="Hamlin J.L."/>
            <person name="Hsueh Y.-P."/>
            <person name="Ianiri G."/>
            <person name="Jones S."/>
            <person name="Kodira C.D."/>
            <person name="Kozubowski L."/>
            <person name="Lam W."/>
            <person name="Marra M."/>
            <person name="Mesner L.D."/>
            <person name="Mieczkowski P.A."/>
            <person name="Moyrand F."/>
            <person name="Nielsen K."/>
            <person name="Proux C."/>
            <person name="Rossignol T."/>
            <person name="Schein J.E."/>
            <person name="Sun S."/>
            <person name="Wollschlaeger C."/>
            <person name="Wood I.A."/>
            <person name="Zeng Q."/>
            <person name="Neuveglise C."/>
            <person name="Newlon C.S."/>
            <person name="Perfect J.R."/>
            <person name="Lodge J.K."/>
            <person name="Idnurm A."/>
            <person name="Stajich J.E."/>
            <person name="Kronstad J.W."/>
            <person name="Sanyal K."/>
            <person name="Heitman J."/>
            <person name="Fraser J.A."/>
            <person name="Cuomo C.A."/>
            <person name="Dietrich F.S."/>
        </authorList>
    </citation>
    <scope>NUCLEOTIDE SEQUENCE [LARGE SCALE GENOMIC DNA]</scope>
    <source>
        <strain>H99 / ATCC 208821 / CBS 10515 / FGSC 9487</strain>
    </source>
</reference>
<reference evidence="8" key="2">
    <citation type="journal article" date="2010" name="MBio">
        <title>Role of an expanded inositol transporter repertoire in Cryptococcus neoformans sexual reproduction and virulence.</title>
        <authorList>
            <person name="Xue C."/>
            <person name="Liu T."/>
            <person name="Chen L."/>
            <person name="Li W."/>
            <person name="Liu I."/>
            <person name="Kronstad J.W."/>
            <person name="Seyfang A."/>
            <person name="Heitman J."/>
        </authorList>
    </citation>
    <scope>DISRUPTION PHENOTYPE</scope>
</reference>
<reference evidence="8" key="3">
    <citation type="journal article" date="2011" name="Eukaryot. Cell">
        <title>Two major inositol transporters and their role in cryptococcal virulence.</title>
        <authorList>
            <person name="Wang Y."/>
            <person name="Liu T.B."/>
            <person name="Delmas G."/>
            <person name="Park S."/>
            <person name="Perlin D."/>
            <person name="Xue C."/>
        </authorList>
    </citation>
    <scope>FUNCTION</scope>
    <scope>CATALYTIC ACTIVITY</scope>
    <scope>DISRUPTION PHENOTYPE</scope>
</reference>
<reference evidence="8" key="4">
    <citation type="journal article" date="2013" name="PLoS Pathog.">
        <title>Brain inositol is a novel stimulator for promoting Cryptococcus penetration of the blood-brain barrier.</title>
        <authorList>
            <person name="Liu T.B."/>
            <person name="Kim J.C."/>
            <person name="Wang Y."/>
            <person name="Toffaletti D.L."/>
            <person name="Eugenin E."/>
            <person name="Perfect J.R."/>
            <person name="Kim K.J."/>
            <person name="Xue C."/>
        </authorList>
    </citation>
    <scope>INDUCTION</scope>
</reference>
<evidence type="ECO:0000250" key="1">
    <source>
        <dbReference type="UniProtKB" id="P11986"/>
    </source>
</evidence>
<evidence type="ECO:0000250" key="2">
    <source>
        <dbReference type="UniProtKB" id="Q9NPH2"/>
    </source>
</evidence>
<evidence type="ECO:0000256" key="3">
    <source>
        <dbReference type="SAM" id="MobiDB-lite"/>
    </source>
</evidence>
<evidence type="ECO:0000269" key="4">
    <source>
    </source>
</evidence>
<evidence type="ECO:0000269" key="5">
    <source>
    </source>
</evidence>
<evidence type="ECO:0000269" key="6">
    <source>
    </source>
</evidence>
<evidence type="ECO:0000303" key="7">
    <source>
    </source>
</evidence>
<evidence type="ECO:0000305" key="8"/>
<evidence type="ECO:0000305" key="9">
    <source>
    </source>
</evidence>
<evidence type="ECO:0000312" key="10">
    <source>
        <dbReference type="EMBL" id="AFR97744.1"/>
    </source>
</evidence>
<evidence type="ECO:0000312" key="11">
    <source>
        <dbReference type="Proteomes" id="UP000010091"/>
    </source>
</evidence>
<proteinExistence type="evidence at protein level"/>
<organism evidence="11">
    <name type="scientific">Cryptococcus neoformans var. grubii serotype A (strain H99 / ATCC 208821 / CBS 10515 / FGSC 9487)</name>
    <name type="common">Filobasidiella neoformans var. grubii</name>
    <dbReference type="NCBI Taxonomy" id="235443"/>
    <lineage>
        <taxon>Eukaryota</taxon>
        <taxon>Fungi</taxon>
        <taxon>Dikarya</taxon>
        <taxon>Basidiomycota</taxon>
        <taxon>Agaricomycotina</taxon>
        <taxon>Tremellomycetes</taxon>
        <taxon>Tremellales</taxon>
        <taxon>Cryptococcaceae</taxon>
        <taxon>Cryptococcus</taxon>
        <taxon>Cryptococcus neoformans species complex</taxon>
    </lineage>
</organism>
<dbReference type="EC" id="5.5.1.4" evidence="9"/>
<dbReference type="EMBL" id="CP003830">
    <property type="protein sequence ID" value="AFR97744.1"/>
    <property type="molecule type" value="Genomic_DNA"/>
</dbReference>
<dbReference type="RefSeq" id="XP_012052586.1">
    <property type="nucleotide sequence ID" value="XM_012197196.1"/>
</dbReference>
<dbReference type="SMR" id="J9VYL3"/>
<dbReference type="GeneID" id="23885238"/>
<dbReference type="KEGG" id="cng:CNAG_01539"/>
<dbReference type="VEuPathDB" id="FungiDB:CNAG_01539"/>
<dbReference type="HOGENOM" id="CLU_021486_2_0_1"/>
<dbReference type="OrthoDB" id="4041at5206"/>
<dbReference type="UniPathway" id="UPA00823">
    <property type="reaction ID" value="UER00787"/>
</dbReference>
<dbReference type="Proteomes" id="UP000010091">
    <property type="component" value="Chromosome 11"/>
</dbReference>
<dbReference type="GO" id="GO:0005737">
    <property type="term" value="C:cytoplasm"/>
    <property type="evidence" value="ECO:0007669"/>
    <property type="project" value="UniProtKB-SubCell"/>
</dbReference>
<dbReference type="GO" id="GO:0004512">
    <property type="term" value="F:inositol-3-phosphate synthase activity"/>
    <property type="evidence" value="ECO:0000315"/>
    <property type="project" value="UniProtKB"/>
</dbReference>
<dbReference type="GO" id="GO:0006021">
    <property type="term" value="P:inositol biosynthetic process"/>
    <property type="evidence" value="ECO:0000315"/>
    <property type="project" value="UniProtKB"/>
</dbReference>
<dbReference type="GO" id="GO:0008654">
    <property type="term" value="P:phospholipid biosynthetic process"/>
    <property type="evidence" value="ECO:0007669"/>
    <property type="project" value="UniProtKB-KW"/>
</dbReference>
<dbReference type="FunFam" id="3.40.50.720:FF:000334">
    <property type="entry name" value="Inositol-3-phosphate synthase"/>
    <property type="match status" value="1"/>
</dbReference>
<dbReference type="FunFam" id="3.40.50.720:FF:000069">
    <property type="entry name" value="Inositol-3-phosphate synthase 1"/>
    <property type="match status" value="1"/>
</dbReference>
<dbReference type="Gene3D" id="3.40.50.720">
    <property type="entry name" value="NAD(P)-binding Rossmann-like Domain"/>
    <property type="match status" value="2"/>
</dbReference>
<dbReference type="InterPro" id="IPR002587">
    <property type="entry name" value="Myo-inos-1-P_Synthase"/>
</dbReference>
<dbReference type="InterPro" id="IPR013021">
    <property type="entry name" value="Myo-inos-1-P_Synthase_GAPDH"/>
</dbReference>
<dbReference type="InterPro" id="IPR036291">
    <property type="entry name" value="NAD(P)-bd_dom_sf"/>
</dbReference>
<dbReference type="PANTHER" id="PTHR11510">
    <property type="entry name" value="MYO-INOSITOL-1 PHOSPHATE SYNTHASE"/>
    <property type="match status" value="1"/>
</dbReference>
<dbReference type="Pfam" id="PF01658">
    <property type="entry name" value="Inos-1-P_synth"/>
    <property type="match status" value="1"/>
</dbReference>
<dbReference type="Pfam" id="PF07994">
    <property type="entry name" value="NAD_binding_5"/>
    <property type="match status" value="1"/>
</dbReference>
<dbReference type="PIRSF" id="PIRSF015578">
    <property type="entry name" value="Myoinos-ppht_syn"/>
    <property type="match status" value="1"/>
</dbReference>
<dbReference type="SUPFAM" id="SSF55347">
    <property type="entry name" value="Glyceraldehyde-3-phosphate dehydrogenase-like, C-terminal domain"/>
    <property type="match status" value="1"/>
</dbReference>
<dbReference type="SUPFAM" id="SSF51735">
    <property type="entry name" value="NAD(P)-binding Rossmann-fold domains"/>
    <property type="match status" value="1"/>
</dbReference>